<protein>
    <recommendedName>
        <fullName evidence="1">Redox-sensing transcriptional repressor Rex</fullName>
    </recommendedName>
</protein>
<keyword id="KW-0963">Cytoplasm</keyword>
<keyword id="KW-0238">DNA-binding</keyword>
<keyword id="KW-0520">NAD</keyword>
<keyword id="KW-1185">Reference proteome</keyword>
<keyword id="KW-0678">Repressor</keyword>
<keyword id="KW-0804">Transcription</keyword>
<keyword id="KW-0805">Transcription regulation</keyword>
<name>REX_BREBN</name>
<proteinExistence type="inferred from homology"/>
<accession>C0ZCH6</accession>
<feature type="chain" id="PRO_1000164079" description="Redox-sensing transcriptional repressor Rex">
    <location>
        <begin position="1"/>
        <end position="207"/>
    </location>
</feature>
<feature type="DNA-binding region" description="H-T-H motif" evidence="1">
    <location>
        <begin position="17"/>
        <end position="56"/>
    </location>
</feature>
<feature type="binding site" evidence="1">
    <location>
        <begin position="91"/>
        <end position="96"/>
    </location>
    <ligand>
        <name>NAD(+)</name>
        <dbReference type="ChEBI" id="CHEBI:57540"/>
    </ligand>
</feature>
<comment type="function">
    <text evidence="1">Modulates transcription in response to changes in cellular NADH/NAD(+) redox state.</text>
</comment>
<comment type="subunit">
    <text evidence="1">Homodimer.</text>
</comment>
<comment type="subcellular location">
    <subcellularLocation>
        <location evidence="1">Cytoplasm</location>
    </subcellularLocation>
</comment>
<comment type="similarity">
    <text evidence="1">Belongs to the transcriptional regulatory Rex family.</text>
</comment>
<dbReference type="EMBL" id="AP008955">
    <property type="protein sequence ID" value="BAH43485.1"/>
    <property type="molecule type" value="Genomic_DNA"/>
</dbReference>
<dbReference type="RefSeq" id="WP_012686190.1">
    <property type="nucleotide sequence ID" value="NC_012491.1"/>
</dbReference>
<dbReference type="SMR" id="C0ZCH6"/>
<dbReference type="STRING" id="358681.BBR47_25080"/>
<dbReference type="KEGG" id="bbe:BBR47_25080"/>
<dbReference type="eggNOG" id="COG2344">
    <property type="taxonomic scope" value="Bacteria"/>
</dbReference>
<dbReference type="HOGENOM" id="CLU_061534_1_1_9"/>
<dbReference type="Proteomes" id="UP000001877">
    <property type="component" value="Chromosome"/>
</dbReference>
<dbReference type="GO" id="GO:0005737">
    <property type="term" value="C:cytoplasm"/>
    <property type="evidence" value="ECO:0007669"/>
    <property type="project" value="UniProtKB-SubCell"/>
</dbReference>
<dbReference type="GO" id="GO:0003677">
    <property type="term" value="F:DNA binding"/>
    <property type="evidence" value="ECO:0007669"/>
    <property type="project" value="UniProtKB-UniRule"/>
</dbReference>
<dbReference type="GO" id="GO:0003700">
    <property type="term" value="F:DNA-binding transcription factor activity"/>
    <property type="evidence" value="ECO:0007669"/>
    <property type="project" value="UniProtKB-UniRule"/>
</dbReference>
<dbReference type="GO" id="GO:0045892">
    <property type="term" value="P:negative regulation of DNA-templated transcription"/>
    <property type="evidence" value="ECO:0007669"/>
    <property type="project" value="InterPro"/>
</dbReference>
<dbReference type="GO" id="GO:0051775">
    <property type="term" value="P:response to redox state"/>
    <property type="evidence" value="ECO:0007669"/>
    <property type="project" value="InterPro"/>
</dbReference>
<dbReference type="Gene3D" id="3.40.50.720">
    <property type="entry name" value="NAD(P)-binding Rossmann-like Domain"/>
    <property type="match status" value="1"/>
</dbReference>
<dbReference type="Gene3D" id="1.10.10.10">
    <property type="entry name" value="Winged helix-like DNA-binding domain superfamily/Winged helix DNA-binding domain"/>
    <property type="match status" value="1"/>
</dbReference>
<dbReference type="HAMAP" id="MF_01131">
    <property type="entry name" value="Rex"/>
    <property type="match status" value="1"/>
</dbReference>
<dbReference type="InterPro" id="IPR003781">
    <property type="entry name" value="CoA-bd"/>
</dbReference>
<dbReference type="InterPro" id="IPR036291">
    <property type="entry name" value="NAD(P)-bd_dom_sf"/>
</dbReference>
<dbReference type="InterPro" id="IPR009718">
    <property type="entry name" value="Rex_DNA-bd_C_dom"/>
</dbReference>
<dbReference type="InterPro" id="IPR022876">
    <property type="entry name" value="Tscrpt_rep_Rex"/>
</dbReference>
<dbReference type="InterPro" id="IPR036388">
    <property type="entry name" value="WH-like_DNA-bd_sf"/>
</dbReference>
<dbReference type="InterPro" id="IPR036390">
    <property type="entry name" value="WH_DNA-bd_sf"/>
</dbReference>
<dbReference type="NCBIfam" id="NF003989">
    <property type="entry name" value="PRK05472.1-3"/>
    <property type="match status" value="1"/>
</dbReference>
<dbReference type="NCBIfam" id="NF003993">
    <property type="entry name" value="PRK05472.2-2"/>
    <property type="match status" value="1"/>
</dbReference>
<dbReference type="NCBIfam" id="NF003994">
    <property type="entry name" value="PRK05472.2-3"/>
    <property type="match status" value="1"/>
</dbReference>
<dbReference type="NCBIfam" id="NF003995">
    <property type="entry name" value="PRK05472.2-4"/>
    <property type="match status" value="1"/>
</dbReference>
<dbReference type="NCBIfam" id="NF003996">
    <property type="entry name" value="PRK05472.2-5"/>
    <property type="match status" value="1"/>
</dbReference>
<dbReference type="PANTHER" id="PTHR35786">
    <property type="entry name" value="REDOX-SENSING TRANSCRIPTIONAL REPRESSOR REX"/>
    <property type="match status" value="1"/>
</dbReference>
<dbReference type="PANTHER" id="PTHR35786:SF1">
    <property type="entry name" value="REDOX-SENSING TRANSCRIPTIONAL REPRESSOR REX 1"/>
    <property type="match status" value="1"/>
</dbReference>
<dbReference type="Pfam" id="PF02629">
    <property type="entry name" value="CoA_binding"/>
    <property type="match status" value="1"/>
</dbReference>
<dbReference type="Pfam" id="PF06971">
    <property type="entry name" value="Put_DNA-bind_N"/>
    <property type="match status" value="1"/>
</dbReference>
<dbReference type="SMART" id="SM00881">
    <property type="entry name" value="CoA_binding"/>
    <property type="match status" value="1"/>
</dbReference>
<dbReference type="SUPFAM" id="SSF51735">
    <property type="entry name" value="NAD(P)-binding Rossmann-fold domains"/>
    <property type="match status" value="1"/>
</dbReference>
<dbReference type="SUPFAM" id="SSF46785">
    <property type="entry name" value="Winged helix' DNA-binding domain"/>
    <property type="match status" value="1"/>
</dbReference>
<gene>
    <name evidence="1" type="primary">rex</name>
    <name type="ordered locus">BBR47_25080</name>
</gene>
<organism>
    <name type="scientific">Brevibacillus brevis (strain 47 / JCM 6285 / NBRC 100599)</name>
    <dbReference type="NCBI Taxonomy" id="358681"/>
    <lineage>
        <taxon>Bacteria</taxon>
        <taxon>Bacillati</taxon>
        <taxon>Bacillota</taxon>
        <taxon>Bacilli</taxon>
        <taxon>Bacillales</taxon>
        <taxon>Paenibacillaceae</taxon>
        <taxon>Brevibacillus</taxon>
    </lineage>
</organism>
<reference key="1">
    <citation type="submission" date="2005-03" db="EMBL/GenBank/DDBJ databases">
        <title>Brevibacillus brevis strain 47, complete genome.</title>
        <authorList>
            <person name="Hosoyama A."/>
            <person name="Yamada R."/>
            <person name="Hongo Y."/>
            <person name="Terui Y."/>
            <person name="Ankai A."/>
            <person name="Masuyama W."/>
            <person name="Sekiguchi M."/>
            <person name="Takeda T."/>
            <person name="Asano K."/>
            <person name="Ohji S."/>
            <person name="Ichikawa N."/>
            <person name="Narita S."/>
            <person name="Aoki N."/>
            <person name="Miura H."/>
            <person name="Matsushita S."/>
            <person name="Sekigawa T."/>
            <person name="Yamagata H."/>
            <person name="Yoshikawa H."/>
            <person name="Udaka S."/>
            <person name="Tanikawa S."/>
            <person name="Fujita N."/>
        </authorList>
    </citation>
    <scope>NUCLEOTIDE SEQUENCE [LARGE SCALE GENOMIC DNA]</scope>
    <source>
        <strain>47 / JCM 6285 / NBRC 100599</strain>
    </source>
</reference>
<evidence type="ECO:0000255" key="1">
    <source>
        <dbReference type="HAMAP-Rule" id="MF_01131"/>
    </source>
</evidence>
<sequence length="207" mass="22894">MAKHEKISEAVVRRLPIYLRYLSYLQQVEVTTVSSQQMGKNLDVNPAQIRKDLAAFGDFGKKGIGYDVDYLVEKIREILKLTDEIRVALVGAGHLGHAISNYNAYLKDNMRIAAIFDNNPEKQGKKVAGIPIQPLSELEETIVNKQIKLAIITVPAPAAQSVCDQLTQAGIKGILNFAPTTIRAGKDVRIHYADVTSNLQSLAYYLT</sequence>